<comment type="function">
    <text evidence="1">Part of the ABC transporter complex PhnCDE involved in phosphonates import. Responsible for energy coupling to the transport system.</text>
</comment>
<comment type="catalytic activity">
    <reaction evidence="1">
        <text>phosphonate(out) + ATP + H2O = phosphonate(in) + ADP + phosphate + H(+)</text>
        <dbReference type="Rhea" id="RHEA:18065"/>
        <dbReference type="ChEBI" id="CHEBI:15377"/>
        <dbReference type="ChEBI" id="CHEBI:15378"/>
        <dbReference type="ChEBI" id="CHEBI:16215"/>
        <dbReference type="ChEBI" id="CHEBI:30616"/>
        <dbReference type="ChEBI" id="CHEBI:43474"/>
        <dbReference type="ChEBI" id="CHEBI:456216"/>
        <dbReference type="EC" id="7.3.2.2"/>
    </reaction>
</comment>
<comment type="subunit">
    <text evidence="1">The complex is composed of two ATP-binding proteins (PhnC), two transmembrane proteins (PhnE) and a solute-binding protein (PhnD).</text>
</comment>
<comment type="subcellular location">
    <subcellularLocation>
        <location evidence="1">Cell membrane</location>
        <topology evidence="1">Peripheral membrane protein</topology>
    </subcellularLocation>
</comment>
<comment type="similarity">
    <text evidence="1">Belongs to the ABC transporter superfamily. Phosphonates importer (TC 3.A.1.9.1) family.</text>
</comment>
<keyword id="KW-0067">ATP-binding</keyword>
<keyword id="KW-1003">Cell membrane</keyword>
<keyword id="KW-0472">Membrane</keyword>
<keyword id="KW-0547">Nucleotide-binding</keyword>
<keyword id="KW-0918">Phosphonate transport</keyword>
<keyword id="KW-1185">Reference proteome</keyword>
<keyword id="KW-1278">Translocase</keyword>
<keyword id="KW-0813">Transport</keyword>
<gene>
    <name evidence="1" type="primary">phnC1</name>
    <name type="ordered locus">HQ_1382A</name>
</gene>
<evidence type="ECO:0000255" key="1">
    <source>
        <dbReference type="HAMAP-Rule" id="MF_01713"/>
    </source>
</evidence>
<evidence type="ECO:0000256" key="2">
    <source>
        <dbReference type="SAM" id="MobiDB-lite"/>
    </source>
</evidence>
<reference key="1">
    <citation type="journal article" date="2006" name="BMC Genomics">
        <title>The genome of the square archaeon Haloquadratum walsbyi: life at the limits of water activity.</title>
        <authorList>
            <person name="Bolhuis H."/>
            <person name="Palm P."/>
            <person name="Wende A."/>
            <person name="Falb M."/>
            <person name="Rampp M."/>
            <person name="Rodriguez-Valera F."/>
            <person name="Pfeiffer F."/>
            <person name="Oesterhelt D."/>
        </authorList>
    </citation>
    <scope>NUCLEOTIDE SEQUENCE [LARGE SCALE GENOMIC DNA]</scope>
    <source>
        <strain>DSM 16790 / HBSQ001</strain>
    </source>
</reference>
<name>PHNC1_HALWD</name>
<accession>Q18KE1</accession>
<dbReference type="EC" id="7.3.2.2" evidence="1"/>
<dbReference type="EMBL" id="AM180088">
    <property type="protein sequence ID" value="CAJ51510.1"/>
    <property type="molecule type" value="Genomic_DNA"/>
</dbReference>
<dbReference type="RefSeq" id="WP_011570665.1">
    <property type="nucleotide sequence ID" value="NC_008212.1"/>
</dbReference>
<dbReference type="SMR" id="Q18KE1"/>
<dbReference type="STRING" id="362976.HQ_1382A"/>
<dbReference type="GeneID" id="4194447"/>
<dbReference type="KEGG" id="hwa:HQ_1382A"/>
<dbReference type="eggNOG" id="arCOG00206">
    <property type="taxonomic scope" value="Archaea"/>
</dbReference>
<dbReference type="HOGENOM" id="CLU_000604_1_22_2"/>
<dbReference type="Proteomes" id="UP000001975">
    <property type="component" value="Chromosome"/>
</dbReference>
<dbReference type="GO" id="GO:0005886">
    <property type="term" value="C:plasma membrane"/>
    <property type="evidence" value="ECO:0007669"/>
    <property type="project" value="UniProtKB-SubCell"/>
</dbReference>
<dbReference type="GO" id="GO:0015416">
    <property type="term" value="F:ABC-type phosphonate transporter activity"/>
    <property type="evidence" value="ECO:0007669"/>
    <property type="project" value="UniProtKB-EC"/>
</dbReference>
<dbReference type="GO" id="GO:0005524">
    <property type="term" value="F:ATP binding"/>
    <property type="evidence" value="ECO:0007669"/>
    <property type="project" value="UniProtKB-KW"/>
</dbReference>
<dbReference type="GO" id="GO:0016887">
    <property type="term" value="F:ATP hydrolysis activity"/>
    <property type="evidence" value="ECO:0007669"/>
    <property type="project" value="InterPro"/>
</dbReference>
<dbReference type="CDD" id="cd03256">
    <property type="entry name" value="ABC_PhnC_transporter"/>
    <property type="match status" value="1"/>
</dbReference>
<dbReference type="Gene3D" id="3.40.50.300">
    <property type="entry name" value="P-loop containing nucleotide triphosphate hydrolases"/>
    <property type="match status" value="1"/>
</dbReference>
<dbReference type="InterPro" id="IPR003593">
    <property type="entry name" value="AAA+_ATPase"/>
</dbReference>
<dbReference type="InterPro" id="IPR003439">
    <property type="entry name" value="ABC_transporter-like_ATP-bd"/>
</dbReference>
<dbReference type="InterPro" id="IPR017871">
    <property type="entry name" value="ABC_transporter-like_CS"/>
</dbReference>
<dbReference type="InterPro" id="IPR012693">
    <property type="entry name" value="ABC_transpr_PhnC"/>
</dbReference>
<dbReference type="InterPro" id="IPR050086">
    <property type="entry name" value="MetN_ABC_transporter-like"/>
</dbReference>
<dbReference type="InterPro" id="IPR027417">
    <property type="entry name" value="P-loop_NTPase"/>
</dbReference>
<dbReference type="PANTHER" id="PTHR43166">
    <property type="entry name" value="AMINO ACID IMPORT ATP-BINDING PROTEIN"/>
    <property type="match status" value="1"/>
</dbReference>
<dbReference type="PANTHER" id="PTHR43166:SF6">
    <property type="entry name" value="PHOSPHONATES IMPORT ATP-BINDING PROTEIN PHNC"/>
    <property type="match status" value="1"/>
</dbReference>
<dbReference type="Pfam" id="PF00005">
    <property type="entry name" value="ABC_tran"/>
    <property type="match status" value="1"/>
</dbReference>
<dbReference type="SMART" id="SM00382">
    <property type="entry name" value="AAA"/>
    <property type="match status" value="1"/>
</dbReference>
<dbReference type="SUPFAM" id="SSF52540">
    <property type="entry name" value="P-loop containing nucleoside triphosphate hydrolases"/>
    <property type="match status" value="1"/>
</dbReference>
<dbReference type="PROSITE" id="PS00211">
    <property type="entry name" value="ABC_TRANSPORTER_1"/>
    <property type="match status" value="1"/>
</dbReference>
<dbReference type="PROSITE" id="PS50893">
    <property type="entry name" value="ABC_TRANSPORTER_2"/>
    <property type="match status" value="1"/>
</dbReference>
<dbReference type="PROSITE" id="PS51249">
    <property type="entry name" value="PHNC"/>
    <property type="match status" value="1"/>
</dbReference>
<organism>
    <name type="scientific">Haloquadratum walsbyi (strain DSM 16790 / HBSQ001)</name>
    <dbReference type="NCBI Taxonomy" id="362976"/>
    <lineage>
        <taxon>Archaea</taxon>
        <taxon>Methanobacteriati</taxon>
        <taxon>Methanobacteriota</taxon>
        <taxon>Stenosarchaea group</taxon>
        <taxon>Halobacteria</taxon>
        <taxon>Halobacteriales</taxon>
        <taxon>Haloferacaceae</taxon>
        <taxon>Haloquadratum</taxon>
    </lineage>
</organism>
<proteinExistence type="inferred from homology"/>
<feature type="chain" id="PRO_0000274771" description="Phosphonates import ATP-binding protein PhnC 1">
    <location>
        <begin position="1"/>
        <end position="304"/>
    </location>
</feature>
<feature type="domain" description="ABC transporter" evidence="1">
    <location>
        <begin position="4"/>
        <end position="240"/>
    </location>
</feature>
<feature type="region of interest" description="Disordered" evidence="2">
    <location>
        <begin position="240"/>
        <end position="304"/>
    </location>
</feature>
<feature type="compositionally biased region" description="Polar residues" evidence="2">
    <location>
        <begin position="263"/>
        <end position="272"/>
    </location>
</feature>
<feature type="compositionally biased region" description="Acidic residues" evidence="2">
    <location>
        <begin position="289"/>
        <end position="304"/>
    </location>
</feature>
<feature type="binding site" evidence="1">
    <location>
        <begin position="37"/>
        <end position="44"/>
    </location>
    <ligand>
        <name>ATP</name>
        <dbReference type="ChEBI" id="CHEBI:30616"/>
    </ligand>
</feature>
<sequence>MPHVSLQNVTKLFGEDTIALDDVSIEITAGEFVVILGPSGAGKSTLLRILNGLTEPTTGTAQIGGSPVSESGSDVGMVFQMHYLIESLSAYRNALTGALSRTTNLKSILTLNQTDDKRAALRALDTVGLLKDAEQRAGTMSGGQKQRVGIARALVQNPSLLLADEPVSSLDPKAARDVMRYMKQAARERELTTVASLHQVNIAREFGDRFIGVRDGTVIFDGSRAELSMDVIDDLYYAGSESTPVSHGDIEGQGEGLTKPDDTSVSSDMETTSGRDHSTGTDTGTDTGTDTETDTETDTGEAQL</sequence>
<protein>
    <recommendedName>
        <fullName evidence="1">Phosphonates import ATP-binding protein PhnC 1</fullName>
        <ecNumber evidence="1">7.3.2.2</ecNumber>
    </recommendedName>
</protein>